<feature type="signal peptide" evidence="2">
    <location>
        <begin position="1"/>
        <end position="19"/>
    </location>
</feature>
<feature type="propeptide" id="PRO_0000401579" evidence="1">
    <location>
        <begin position="20"/>
        <end position="40"/>
    </location>
</feature>
<feature type="chain" id="PRO_0000401580" description="U1-lycotoxin-Ls1z">
    <location>
        <begin position="41"/>
        <end position="106"/>
    </location>
</feature>
<feature type="disulfide bond" evidence="1">
    <location>
        <begin position="43"/>
        <end position="58"/>
    </location>
</feature>
<feature type="disulfide bond" evidence="1">
    <location>
        <begin position="50"/>
        <end position="67"/>
    </location>
</feature>
<feature type="disulfide bond" evidence="1">
    <location>
        <begin position="57"/>
        <end position="85"/>
    </location>
</feature>
<feature type="disulfide bond" evidence="1">
    <location>
        <begin position="69"/>
        <end position="83"/>
    </location>
</feature>
<protein>
    <recommendedName>
        <fullName>U1-lycotoxin-Ls1z</fullName>
    </recommendedName>
    <alternativeName>
        <fullName>Toxin-like structure LSTX-A42</fullName>
    </alternativeName>
</protein>
<name>TX142_LYCSI</name>
<evidence type="ECO:0000250" key="1"/>
<evidence type="ECO:0000255" key="2"/>
<evidence type="ECO:0000305" key="3"/>
<comment type="subcellular location">
    <subcellularLocation>
        <location evidence="1">Secreted</location>
    </subcellularLocation>
</comment>
<comment type="tissue specificity">
    <text>Expressed by the venom gland.</text>
</comment>
<comment type="domain">
    <text evidence="1">The presence of a 'disulfide through disulfide knot' structurally defines this protein as a knottin.</text>
</comment>
<comment type="similarity">
    <text evidence="3">Belongs to the neurotoxin 19 (CSTX) family. 03 subfamily.</text>
</comment>
<organism>
    <name type="scientific">Lycosa singoriensis</name>
    <name type="common">Wolf spider</name>
    <name type="synonym">Aranea singoriensis</name>
    <dbReference type="NCBI Taxonomy" id="434756"/>
    <lineage>
        <taxon>Eukaryota</taxon>
        <taxon>Metazoa</taxon>
        <taxon>Ecdysozoa</taxon>
        <taxon>Arthropoda</taxon>
        <taxon>Chelicerata</taxon>
        <taxon>Arachnida</taxon>
        <taxon>Araneae</taxon>
        <taxon>Araneomorphae</taxon>
        <taxon>Entelegynae</taxon>
        <taxon>Lycosoidea</taxon>
        <taxon>Lycosidae</taxon>
        <taxon>Lycosa</taxon>
    </lineage>
</organism>
<keyword id="KW-1015">Disulfide bond</keyword>
<keyword id="KW-0960">Knottin</keyword>
<keyword id="KW-0964">Secreted</keyword>
<keyword id="KW-0732">Signal</keyword>
<keyword id="KW-0800">Toxin</keyword>
<sequence>MKVLVVVALLVTLISYSSSEGIDDLEADELLSLMANEQTRKECIPKHHECTSNKHGCCRGHLFKYKCQCTTVVTQSGEETEGCFCGTPPHHKAAELVVGFGKKIFG</sequence>
<proteinExistence type="evidence at transcript level"/>
<reference key="1">
    <citation type="journal article" date="2010" name="Zoology">
        <title>Transcriptome analysis of the venom glands of the Chinese wolf spider Lycosa singoriensis.</title>
        <authorList>
            <person name="Zhang Y."/>
            <person name="Chen J."/>
            <person name="Tang X."/>
            <person name="Wang F."/>
            <person name="Jiang L."/>
            <person name="Xiong X."/>
            <person name="Wang M."/>
            <person name="Rong M."/>
            <person name="Liu Z."/>
            <person name="Liang S."/>
        </authorList>
    </citation>
    <scope>NUCLEOTIDE SEQUENCE [LARGE SCALE MRNA]</scope>
    <source>
        <tissue>Venom gland</tissue>
    </source>
</reference>
<accession>B6DCN1</accession>
<dbReference type="EMBL" id="EU925965">
    <property type="protein sequence ID" value="ACI41297.1"/>
    <property type="molecule type" value="mRNA"/>
</dbReference>
<dbReference type="EMBL" id="FM863969">
    <property type="protein sequence ID" value="CAS03567.1"/>
    <property type="molecule type" value="mRNA"/>
</dbReference>
<dbReference type="SMR" id="B6DCN1"/>
<dbReference type="ArachnoServer" id="AS000914">
    <property type="toxin name" value="U1-lycotoxin-Ls1z"/>
</dbReference>
<dbReference type="GO" id="GO:0005576">
    <property type="term" value="C:extracellular region"/>
    <property type="evidence" value="ECO:0007669"/>
    <property type="project" value="UniProtKB-SubCell"/>
</dbReference>
<dbReference type="GO" id="GO:0090729">
    <property type="term" value="F:toxin activity"/>
    <property type="evidence" value="ECO:0007669"/>
    <property type="project" value="UniProtKB-KW"/>
</dbReference>
<dbReference type="InterPro" id="IPR019553">
    <property type="entry name" value="Spider_toxin_CSTX_knottin"/>
</dbReference>
<dbReference type="InterPro" id="IPR011142">
    <property type="entry name" value="Spider_toxin_CSTX_Knottin_CS"/>
</dbReference>
<dbReference type="Pfam" id="PF10530">
    <property type="entry name" value="Toxin_35"/>
    <property type="match status" value="1"/>
</dbReference>
<dbReference type="PROSITE" id="PS60029">
    <property type="entry name" value="SPIDER_CSTX"/>
    <property type="match status" value="1"/>
</dbReference>